<organism>
    <name type="scientific">Eremothecium gossypii (strain ATCC 10895 / CBS 109.51 / FGSC 9923 / NRRL Y-1056)</name>
    <name type="common">Yeast</name>
    <name type="synonym">Ashbya gossypii</name>
    <dbReference type="NCBI Taxonomy" id="284811"/>
    <lineage>
        <taxon>Eukaryota</taxon>
        <taxon>Fungi</taxon>
        <taxon>Dikarya</taxon>
        <taxon>Ascomycota</taxon>
        <taxon>Saccharomycotina</taxon>
        <taxon>Saccharomycetes</taxon>
        <taxon>Saccharomycetales</taxon>
        <taxon>Saccharomycetaceae</taxon>
        <taxon>Eremothecium</taxon>
    </lineage>
</organism>
<dbReference type="EMBL" id="AE016814">
    <property type="protein sequence ID" value="AAS50297.1"/>
    <property type="molecule type" value="Genomic_DNA"/>
</dbReference>
<dbReference type="RefSeq" id="NP_982473.1">
    <property type="nucleotide sequence ID" value="NM_207826.2"/>
</dbReference>
<dbReference type="SMR" id="Q75EZ7"/>
<dbReference type="FunCoup" id="Q75EZ7">
    <property type="interactions" value="119"/>
</dbReference>
<dbReference type="STRING" id="284811.Q75EZ7"/>
<dbReference type="EnsemblFungi" id="AAS50297">
    <property type="protein sequence ID" value="AAS50297"/>
    <property type="gene ID" value="AGOS_AAL069C"/>
</dbReference>
<dbReference type="GeneID" id="4618791"/>
<dbReference type="KEGG" id="ago:AGOS_AAL069C"/>
<dbReference type="eggNOG" id="ENOG502QU6B">
    <property type="taxonomic scope" value="Eukaryota"/>
</dbReference>
<dbReference type="HOGENOM" id="CLU_409446_0_0_1"/>
<dbReference type="InParanoid" id="Q75EZ7"/>
<dbReference type="OMA" id="DHYMPRQ"/>
<dbReference type="OrthoDB" id="4034449at2759"/>
<dbReference type="Proteomes" id="UP000000591">
    <property type="component" value="Chromosome I"/>
</dbReference>
<dbReference type="GO" id="GO:0005829">
    <property type="term" value="C:cytosol"/>
    <property type="evidence" value="ECO:0007669"/>
    <property type="project" value="EnsemblFungi"/>
</dbReference>
<dbReference type="GO" id="GO:0070823">
    <property type="term" value="C:HDA1 complex"/>
    <property type="evidence" value="ECO:0007669"/>
    <property type="project" value="EnsemblFungi"/>
</dbReference>
<dbReference type="GO" id="GO:0003682">
    <property type="term" value="F:chromatin binding"/>
    <property type="evidence" value="ECO:0007669"/>
    <property type="project" value="EnsemblFungi"/>
</dbReference>
<dbReference type="GO" id="GO:0003677">
    <property type="term" value="F:DNA binding"/>
    <property type="evidence" value="ECO:0007669"/>
    <property type="project" value="EnsemblFungi"/>
</dbReference>
<dbReference type="GO" id="GO:0004407">
    <property type="term" value="F:histone deacetylase activity"/>
    <property type="evidence" value="ECO:0007669"/>
    <property type="project" value="EnsemblFungi"/>
</dbReference>
<dbReference type="GO" id="GO:0006325">
    <property type="term" value="P:chromatin organization"/>
    <property type="evidence" value="ECO:0007669"/>
    <property type="project" value="UniProtKB-KW"/>
</dbReference>
<dbReference type="GO" id="GO:0000122">
    <property type="term" value="P:negative regulation of transcription by RNA polymerase II"/>
    <property type="evidence" value="ECO:0007669"/>
    <property type="project" value="EnsemblFungi"/>
</dbReference>
<dbReference type="GO" id="GO:0031047">
    <property type="term" value="P:regulatory ncRNA-mediated gene silencing"/>
    <property type="evidence" value="ECO:0007669"/>
    <property type="project" value="EnsemblFungi"/>
</dbReference>
<dbReference type="Gene3D" id="1.10.287.1490">
    <property type="match status" value="1"/>
</dbReference>
<dbReference type="Gene3D" id="3.40.50.12360">
    <property type="match status" value="1"/>
</dbReference>
<dbReference type="InterPro" id="IPR038609">
    <property type="entry name" value="HDA1_su2/3_sf"/>
</dbReference>
<dbReference type="InterPro" id="IPR021006">
    <property type="entry name" value="Hda2/3"/>
</dbReference>
<dbReference type="Pfam" id="PF11496">
    <property type="entry name" value="HDA2-3"/>
    <property type="match status" value="1"/>
</dbReference>
<sequence>MNFCSKNAQMYYIPVGLTSLQKDLIEILLCMHAESFLEEFGPSEAVMQSAAQIKTEKEPEAVEGLGLGPLTPTQMNTMLLRHLRAVANHPCLLVDHYMPRKFLLMEPGEELIAMSEKFRVLNQMMEAILSRRRRQRPLQLVLVSHSVKELDLIEGFMLGKMVKIKRLSGTSLFDEKHQYTERGTAAAESNSTLTSGSTLKDTSPGSVEGKLSSGEAGAGYTTGGIKDDYDYQNSRRHMRAADDGAERQCDHEDWLFLATTTHLTHCTDLFDQYDVDVVLSLDPLLDVSLPALRSVRKQSKSVPLVKLFVQDSAEHFMLTRGISAEHEEDHIYDAVGHFIKNRGVHRQRLGMSAAALAEVVTALLENCEAATDLKSTKPTDTPSELSIVDALSERIMLLKLNHTPYELPLQRGPFSMKSYQLQLKQLIYARLEACQREQECKCAYILDRRMQETANLNRLDEVNAEAGRLFQSLKDEEKLVVDSERRLERTRDEHDRLREKSAHLRRRKAELEELLASSDLDSRVSSKRARLAELRQQLMPLEQQNTAMADSNEELRTRYQTRSSHAATLSSALASLRERKAALTKESTGPATCWMAASATEEHDRLQTELNDLVQQRHFLQKYIDTMKSQYAITNLDELNRTQHNKSGAATSRVRTTRATSPTYI</sequence>
<feature type="chain" id="PRO_0000083929" description="HDA1 complex subunit 2">
    <location>
        <begin position="1"/>
        <end position="665"/>
    </location>
</feature>
<feature type="region of interest" description="Disordered" evidence="3">
    <location>
        <begin position="181"/>
        <end position="219"/>
    </location>
</feature>
<feature type="region of interest" description="Disordered" evidence="3">
    <location>
        <begin position="644"/>
        <end position="665"/>
    </location>
</feature>
<feature type="coiled-coil region" evidence="2">
    <location>
        <begin position="457"/>
        <end position="625"/>
    </location>
</feature>
<feature type="compositionally biased region" description="Polar residues" evidence="3">
    <location>
        <begin position="187"/>
        <end position="205"/>
    </location>
</feature>
<feature type="compositionally biased region" description="Low complexity" evidence="3">
    <location>
        <begin position="647"/>
        <end position="665"/>
    </location>
</feature>
<accession>Q75EZ7</accession>
<reference key="1">
    <citation type="journal article" date="2004" name="Science">
        <title>The Ashbya gossypii genome as a tool for mapping the ancient Saccharomyces cerevisiae genome.</title>
        <authorList>
            <person name="Dietrich F.S."/>
            <person name="Voegeli S."/>
            <person name="Brachat S."/>
            <person name="Lerch A."/>
            <person name="Gates K."/>
            <person name="Steiner S."/>
            <person name="Mohr C."/>
            <person name="Poehlmann R."/>
            <person name="Luedi P."/>
            <person name="Choi S."/>
            <person name="Wing R.A."/>
            <person name="Flavier A."/>
            <person name="Gaffney T.D."/>
            <person name="Philippsen P."/>
        </authorList>
    </citation>
    <scope>NUCLEOTIDE SEQUENCE [LARGE SCALE GENOMIC DNA]</scope>
    <source>
        <strain>ATCC 10895 / CBS 109.51 / FGSC 9923 / NRRL Y-1056</strain>
    </source>
</reference>
<reference key="2">
    <citation type="journal article" date="2013" name="G3 (Bethesda)">
        <title>Genomes of Ashbya fungi isolated from insects reveal four mating-type loci, numerous translocations, lack of transposons, and distinct gene duplications.</title>
        <authorList>
            <person name="Dietrich F.S."/>
            <person name="Voegeli S."/>
            <person name="Kuo S."/>
            <person name="Philippsen P."/>
        </authorList>
    </citation>
    <scope>GENOME REANNOTATION</scope>
    <source>
        <strain>ATCC 10895 / CBS 109.51 / FGSC 9923 / NRRL Y-1056</strain>
    </source>
</reference>
<proteinExistence type="inferred from homology"/>
<gene>
    <name type="primary">HDA2</name>
    <name type="ordered locus">AAL069C</name>
</gene>
<comment type="function">
    <text evidence="1">Required for activity of histone deacetylase complexes that are responsible for the deacetylation of lysine residues on the N-terminal part of the core histones (H2A, H2B, H3 and H4). Histone deacetylation gives a tag for epigenetic repression and plays an important role in transcriptional regulation, cell cycle progression and developmental events (By similarity).</text>
</comment>
<comment type="subunit">
    <text evidence="1">Probable component of some histone deacetylase complex.</text>
</comment>
<comment type="subcellular location">
    <subcellularLocation>
        <location evidence="1">Nucleus</location>
    </subcellularLocation>
</comment>
<comment type="similarity">
    <text evidence="4">Belongs to the HDA2/3 family. HDA2 subfamily.</text>
</comment>
<keyword id="KW-0156">Chromatin regulator</keyword>
<keyword id="KW-0175">Coiled coil</keyword>
<keyword id="KW-0539">Nucleus</keyword>
<keyword id="KW-1185">Reference proteome</keyword>
<keyword id="KW-0678">Repressor</keyword>
<keyword id="KW-0804">Transcription</keyword>
<keyword id="KW-0805">Transcription regulation</keyword>
<protein>
    <recommendedName>
        <fullName>HDA1 complex subunit 2</fullName>
    </recommendedName>
    <alternativeName>
        <fullName>Histone deacetylase complex 1 subunit 2</fullName>
    </alternativeName>
</protein>
<evidence type="ECO:0000250" key="1"/>
<evidence type="ECO:0000255" key="2"/>
<evidence type="ECO:0000256" key="3">
    <source>
        <dbReference type="SAM" id="MobiDB-lite"/>
    </source>
</evidence>
<evidence type="ECO:0000305" key="4"/>
<name>HDA2_EREGS</name>